<gene>
    <name type="ORF">ORF52</name>
</gene>
<dbReference type="EMBL" id="AY509253">
    <property type="protein sequence ID" value="AAS00942.1"/>
    <property type="molecule type" value="Genomic_DNA"/>
</dbReference>
<dbReference type="RefSeq" id="YP_024595.1">
    <property type="nucleotide sequence ID" value="NC_005881.2"/>
</dbReference>
<dbReference type="KEGG" id="vg:2948195"/>
<dbReference type="Proteomes" id="UP000007021">
    <property type="component" value="Segment"/>
</dbReference>
<proteinExistence type="predicted"/>
<feature type="chain" id="PRO_0000385078" description="Uncharacterized protein ORF52">
    <location>
        <begin position="1"/>
        <end position="180"/>
    </location>
</feature>
<name>Y052_OSHVF</name>
<protein>
    <recommendedName>
        <fullName>Uncharacterized protein ORF52</fullName>
    </recommendedName>
</protein>
<reference key="1">
    <citation type="journal article" date="2005" name="J. Gen. Virol.">
        <title>A novel class of herpesvirus with bivalve hosts.</title>
        <authorList>
            <person name="Davison A.J."/>
            <person name="Trus B.L."/>
            <person name="Cheng N."/>
            <person name="Steven A.C."/>
            <person name="Watson M.S."/>
            <person name="Cunningham C."/>
            <person name="Le Deuff R.M."/>
            <person name="Renault T."/>
        </authorList>
    </citation>
    <scope>NUCLEOTIDE SEQUENCE [LARGE SCALE GENOMIC DNA]</scope>
</reference>
<keyword id="KW-1185">Reference proteome</keyword>
<sequence length="180" mass="20839">MSIRLSAVYHPVRDDPDCMFRYMPHEPLPRKLKGDDYTILKLLSDAHRYYYSLSDSFKRVFKESINNAYWSVLTFNDYILINVLDERVKTSIGGDGYEIVSDTTRVIHINIGDEVVLQVVDERVKHYGSSHTIRSIRLVRGEIPDLASFHAYTQSKPYNKGRLPPPREIITPDGHVMKIL</sequence>
<accession>Q6R7H3</accession>
<organismHost>
    <name type="scientific">Magallana gigas</name>
    <name type="common">Pacific oyster</name>
    <name type="synonym">Crassostrea gigas</name>
    <dbReference type="NCBI Taxonomy" id="29159"/>
</organismHost>
<organismHost>
    <name type="scientific">Pecten maximus</name>
    <name type="common">King scallop</name>
    <name type="synonym">Pilgrim's clam</name>
    <dbReference type="NCBI Taxonomy" id="6579"/>
</organismHost>
<organism>
    <name type="scientific">Ostreid herpesvirus 1 (isolate France)</name>
    <name type="common">OsHV-1</name>
    <name type="synonym">Pacific oyster herpesvirus</name>
    <dbReference type="NCBI Taxonomy" id="654903"/>
    <lineage>
        <taxon>Viruses</taxon>
        <taxon>Duplodnaviria</taxon>
        <taxon>Heunggongvirae</taxon>
        <taxon>Peploviricota</taxon>
        <taxon>Herviviricetes</taxon>
        <taxon>Herpesvirales</taxon>
        <taxon>Malacoherpesviridae</taxon>
        <taxon>Ostreavirus</taxon>
        <taxon>Ostreavirus ostreidmalaco1</taxon>
        <taxon>Ostreid herpesvirus 1</taxon>
    </lineage>
</organism>